<organism>
    <name type="scientific">Leptospira interrogans serogroup Icterohaemorrhagiae serovar Lai (strain 56601)</name>
    <dbReference type="NCBI Taxonomy" id="189518"/>
    <lineage>
        <taxon>Bacteria</taxon>
        <taxon>Pseudomonadati</taxon>
        <taxon>Spirochaetota</taxon>
        <taxon>Spirochaetia</taxon>
        <taxon>Leptospirales</taxon>
        <taxon>Leptospiraceae</taxon>
        <taxon>Leptospira</taxon>
    </lineage>
</organism>
<accession>Q8EZB6</accession>
<dbReference type="EC" id="1.1.1.94" evidence="1"/>
<dbReference type="EMBL" id="AE010300">
    <property type="protein sequence ID" value="AAN51137.1"/>
    <property type="molecule type" value="Genomic_DNA"/>
</dbReference>
<dbReference type="RefSeq" id="NP_714119.1">
    <property type="nucleotide sequence ID" value="NC_004342.2"/>
</dbReference>
<dbReference type="RefSeq" id="WP_000690430.1">
    <property type="nucleotide sequence ID" value="NC_004342.2"/>
</dbReference>
<dbReference type="SMR" id="Q8EZB6"/>
<dbReference type="FunCoup" id="Q8EZB6">
    <property type="interactions" value="426"/>
</dbReference>
<dbReference type="STRING" id="189518.LA_3939"/>
<dbReference type="PaxDb" id="189518-LA_3939"/>
<dbReference type="EnsemblBacteria" id="AAN51137">
    <property type="protein sequence ID" value="AAN51137"/>
    <property type="gene ID" value="LA_3939"/>
</dbReference>
<dbReference type="KEGG" id="lil:LA_3939"/>
<dbReference type="PATRIC" id="fig|189518.3.peg.3904"/>
<dbReference type="HOGENOM" id="CLU_033449_0_2_12"/>
<dbReference type="InParanoid" id="Q8EZB6"/>
<dbReference type="OrthoDB" id="9812273at2"/>
<dbReference type="UniPathway" id="UPA00940"/>
<dbReference type="Proteomes" id="UP000001408">
    <property type="component" value="Chromosome I"/>
</dbReference>
<dbReference type="GO" id="GO:0005829">
    <property type="term" value="C:cytosol"/>
    <property type="evidence" value="ECO:0000318"/>
    <property type="project" value="GO_Central"/>
</dbReference>
<dbReference type="GO" id="GO:0047952">
    <property type="term" value="F:glycerol-3-phosphate dehydrogenase [NAD(P)+] activity"/>
    <property type="evidence" value="ECO:0000318"/>
    <property type="project" value="GO_Central"/>
</dbReference>
<dbReference type="GO" id="GO:0051287">
    <property type="term" value="F:NAD binding"/>
    <property type="evidence" value="ECO:0007669"/>
    <property type="project" value="InterPro"/>
</dbReference>
<dbReference type="GO" id="GO:0005975">
    <property type="term" value="P:carbohydrate metabolic process"/>
    <property type="evidence" value="ECO:0007669"/>
    <property type="project" value="InterPro"/>
</dbReference>
<dbReference type="GO" id="GO:0046167">
    <property type="term" value="P:glycerol-3-phosphate biosynthetic process"/>
    <property type="evidence" value="ECO:0007669"/>
    <property type="project" value="UniProtKB-UniRule"/>
</dbReference>
<dbReference type="GO" id="GO:0046168">
    <property type="term" value="P:glycerol-3-phosphate catabolic process"/>
    <property type="evidence" value="ECO:0007669"/>
    <property type="project" value="InterPro"/>
</dbReference>
<dbReference type="GO" id="GO:0006072">
    <property type="term" value="P:glycerol-3-phosphate metabolic process"/>
    <property type="evidence" value="ECO:0000318"/>
    <property type="project" value="GO_Central"/>
</dbReference>
<dbReference type="GO" id="GO:0006650">
    <property type="term" value="P:glycerophospholipid metabolic process"/>
    <property type="evidence" value="ECO:0007669"/>
    <property type="project" value="UniProtKB-UniRule"/>
</dbReference>
<dbReference type="GO" id="GO:0008654">
    <property type="term" value="P:phospholipid biosynthetic process"/>
    <property type="evidence" value="ECO:0007669"/>
    <property type="project" value="UniProtKB-KW"/>
</dbReference>
<dbReference type="FunFam" id="1.10.1040.10:FF:000001">
    <property type="entry name" value="Glycerol-3-phosphate dehydrogenase [NAD(P)+]"/>
    <property type="match status" value="1"/>
</dbReference>
<dbReference type="FunFam" id="3.40.50.720:FF:000019">
    <property type="entry name" value="Glycerol-3-phosphate dehydrogenase [NAD(P)+]"/>
    <property type="match status" value="1"/>
</dbReference>
<dbReference type="Gene3D" id="1.10.1040.10">
    <property type="entry name" value="N-(1-d-carboxylethyl)-l-norvaline Dehydrogenase, domain 2"/>
    <property type="match status" value="1"/>
</dbReference>
<dbReference type="Gene3D" id="3.40.50.720">
    <property type="entry name" value="NAD(P)-binding Rossmann-like Domain"/>
    <property type="match status" value="1"/>
</dbReference>
<dbReference type="HAMAP" id="MF_00394">
    <property type="entry name" value="NAD_Glyc3P_dehydrog"/>
    <property type="match status" value="1"/>
</dbReference>
<dbReference type="InterPro" id="IPR008927">
    <property type="entry name" value="6-PGluconate_DH-like_C_sf"/>
</dbReference>
<dbReference type="InterPro" id="IPR013328">
    <property type="entry name" value="6PGD_dom2"/>
</dbReference>
<dbReference type="InterPro" id="IPR006168">
    <property type="entry name" value="G3P_DH_NAD-dep"/>
</dbReference>
<dbReference type="InterPro" id="IPR006109">
    <property type="entry name" value="G3P_DH_NAD-dep_C"/>
</dbReference>
<dbReference type="InterPro" id="IPR011128">
    <property type="entry name" value="G3P_DH_NAD-dep_N"/>
</dbReference>
<dbReference type="InterPro" id="IPR036291">
    <property type="entry name" value="NAD(P)-bd_dom_sf"/>
</dbReference>
<dbReference type="NCBIfam" id="NF000940">
    <property type="entry name" value="PRK00094.1-2"/>
    <property type="match status" value="1"/>
</dbReference>
<dbReference type="NCBIfam" id="NF000941">
    <property type="entry name" value="PRK00094.1-3"/>
    <property type="match status" value="1"/>
</dbReference>
<dbReference type="NCBIfam" id="NF000942">
    <property type="entry name" value="PRK00094.1-4"/>
    <property type="match status" value="1"/>
</dbReference>
<dbReference type="PANTHER" id="PTHR11728">
    <property type="entry name" value="GLYCEROL-3-PHOSPHATE DEHYDROGENASE"/>
    <property type="match status" value="1"/>
</dbReference>
<dbReference type="PANTHER" id="PTHR11728:SF1">
    <property type="entry name" value="GLYCEROL-3-PHOSPHATE DEHYDROGENASE [NAD(+)] 2, CHLOROPLASTIC"/>
    <property type="match status" value="1"/>
</dbReference>
<dbReference type="Pfam" id="PF07479">
    <property type="entry name" value="NAD_Gly3P_dh_C"/>
    <property type="match status" value="1"/>
</dbReference>
<dbReference type="Pfam" id="PF01210">
    <property type="entry name" value="NAD_Gly3P_dh_N"/>
    <property type="match status" value="1"/>
</dbReference>
<dbReference type="PIRSF" id="PIRSF000114">
    <property type="entry name" value="Glycerol-3-P_dh"/>
    <property type="match status" value="1"/>
</dbReference>
<dbReference type="PRINTS" id="PR00077">
    <property type="entry name" value="GPDHDRGNASE"/>
</dbReference>
<dbReference type="SUPFAM" id="SSF48179">
    <property type="entry name" value="6-phosphogluconate dehydrogenase C-terminal domain-like"/>
    <property type="match status" value="1"/>
</dbReference>
<dbReference type="SUPFAM" id="SSF51735">
    <property type="entry name" value="NAD(P)-binding Rossmann-fold domains"/>
    <property type="match status" value="1"/>
</dbReference>
<dbReference type="PROSITE" id="PS00957">
    <property type="entry name" value="NAD_G3PDH"/>
    <property type="match status" value="1"/>
</dbReference>
<evidence type="ECO:0000255" key="1">
    <source>
        <dbReference type="HAMAP-Rule" id="MF_00394"/>
    </source>
</evidence>
<keyword id="KW-0963">Cytoplasm</keyword>
<keyword id="KW-0444">Lipid biosynthesis</keyword>
<keyword id="KW-0443">Lipid metabolism</keyword>
<keyword id="KW-0520">NAD</keyword>
<keyword id="KW-0521">NADP</keyword>
<keyword id="KW-0547">Nucleotide-binding</keyword>
<keyword id="KW-0560">Oxidoreductase</keyword>
<keyword id="KW-0594">Phospholipid biosynthesis</keyword>
<keyword id="KW-1208">Phospholipid metabolism</keyword>
<keyword id="KW-1185">Reference proteome</keyword>
<comment type="function">
    <text evidence="1">Catalyzes the reduction of the glycolytic intermediate dihydroxyacetone phosphate (DHAP) to sn-glycerol 3-phosphate (G3P), the key precursor for phospholipid synthesis.</text>
</comment>
<comment type="catalytic activity">
    <reaction evidence="1">
        <text>sn-glycerol 3-phosphate + NAD(+) = dihydroxyacetone phosphate + NADH + H(+)</text>
        <dbReference type="Rhea" id="RHEA:11092"/>
        <dbReference type="ChEBI" id="CHEBI:15378"/>
        <dbReference type="ChEBI" id="CHEBI:57540"/>
        <dbReference type="ChEBI" id="CHEBI:57597"/>
        <dbReference type="ChEBI" id="CHEBI:57642"/>
        <dbReference type="ChEBI" id="CHEBI:57945"/>
        <dbReference type="EC" id="1.1.1.94"/>
    </reaction>
    <physiologicalReaction direction="right-to-left" evidence="1">
        <dbReference type="Rhea" id="RHEA:11094"/>
    </physiologicalReaction>
</comment>
<comment type="catalytic activity">
    <reaction evidence="1">
        <text>sn-glycerol 3-phosphate + NADP(+) = dihydroxyacetone phosphate + NADPH + H(+)</text>
        <dbReference type="Rhea" id="RHEA:11096"/>
        <dbReference type="ChEBI" id="CHEBI:15378"/>
        <dbReference type="ChEBI" id="CHEBI:57597"/>
        <dbReference type="ChEBI" id="CHEBI:57642"/>
        <dbReference type="ChEBI" id="CHEBI:57783"/>
        <dbReference type="ChEBI" id="CHEBI:58349"/>
        <dbReference type="EC" id="1.1.1.94"/>
    </reaction>
    <physiologicalReaction direction="right-to-left" evidence="1">
        <dbReference type="Rhea" id="RHEA:11098"/>
    </physiologicalReaction>
</comment>
<comment type="pathway">
    <text evidence="1">Membrane lipid metabolism; glycerophospholipid metabolism.</text>
</comment>
<comment type="subcellular location">
    <subcellularLocation>
        <location evidence="1">Cytoplasm</location>
    </subcellularLocation>
</comment>
<comment type="similarity">
    <text evidence="1">Belongs to the NAD-dependent glycerol-3-phosphate dehydrogenase family.</text>
</comment>
<proteinExistence type="inferred from homology"/>
<protein>
    <recommendedName>
        <fullName evidence="1">Glycerol-3-phosphate dehydrogenase [NAD(P)+]</fullName>
        <ecNumber evidence="1">1.1.1.94</ecNumber>
    </recommendedName>
    <alternativeName>
        <fullName evidence="1">NAD(P)(+)-dependent glycerol-3-phosphate dehydrogenase</fullName>
    </alternativeName>
    <alternativeName>
        <fullName evidence="1">NAD(P)H-dependent dihydroxyacetone-phosphate reductase</fullName>
    </alternativeName>
</protein>
<sequence length="335" mass="36720">MKIGVIGSGSFGTALGSLLADKGYEVILWCRNDSQVESINRNHINNKHLPNFTLPEKLTASKDLRNVVQGKDMIVSSPPSHALSEVLREIKEYLPEKVPIVSASKGIENGTLRLVSEIFESELPEKYHSYLSYLSGPSFAKEIIQKVPTIVSIASKNETTARKVQEIFSFLYFRTYWTPDVIGVEVGGSLKNVIALAAGVSDGLGFGQNTRAALITRGLNEITKIGLKLGADPMTFLGPSGMGDLILTCCGEQSRNRTVGFRLGKGETLEQILSSMNEVAEGVKTTQSAYELSQKLGIEMAITNEVYKMLYEGKNPREVVKDLMKRDLKREGVSV</sequence>
<name>GPDA_LEPIN</name>
<reference key="1">
    <citation type="journal article" date="2003" name="Nature">
        <title>Unique physiological and pathogenic features of Leptospira interrogans revealed by whole-genome sequencing.</title>
        <authorList>
            <person name="Ren S.-X."/>
            <person name="Fu G."/>
            <person name="Jiang X.-G."/>
            <person name="Zeng R."/>
            <person name="Miao Y.-G."/>
            <person name="Xu H."/>
            <person name="Zhang Y.-X."/>
            <person name="Xiong H."/>
            <person name="Lu G."/>
            <person name="Lu L.-F."/>
            <person name="Jiang H.-Q."/>
            <person name="Jia J."/>
            <person name="Tu Y.-F."/>
            <person name="Jiang J.-X."/>
            <person name="Gu W.-Y."/>
            <person name="Zhang Y.-Q."/>
            <person name="Cai Z."/>
            <person name="Sheng H.-H."/>
            <person name="Yin H.-F."/>
            <person name="Zhang Y."/>
            <person name="Zhu G.-F."/>
            <person name="Wan M."/>
            <person name="Huang H.-L."/>
            <person name="Qian Z."/>
            <person name="Wang S.-Y."/>
            <person name="Ma W."/>
            <person name="Yao Z.-J."/>
            <person name="Shen Y."/>
            <person name="Qiang B.-Q."/>
            <person name="Xia Q.-C."/>
            <person name="Guo X.-K."/>
            <person name="Danchin A."/>
            <person name="Saint Girons I."/>
            <person name="Somerville R.L."/>
            <person name="Wen Y.-M."/>
            <person name="Shi M.-H."/>
            <person name="Chen Z."/>
            <person name="Xu J.-G."/>
            <person name="Zhao G.-P."/>
        </authorList>
    </citation>
    <scope>NUCLEOTIDE SEQUENCE [LARGE SCALE GENOMIC DNA]</scope>
    <source>
        <strain>56601</strain>
    </source>
</reference>
<gene>
    <name evidence="1" type="primary">gpsA</name>
    <name type="ordered locus">LA_3939</name>
</gene>
<feature type="chain" id="PRO_0000137982" description="Glycerol-3-phosphate dehydrogenase [NAD(P)+]">
    <location>
        <begin position="1"/>
        <end position="335"/>
    </location>
</feature>
<feature type="active site" description="Proton acceptor" evidence="1">
    <location>
        <position position="191"/>
    </location>
</feature>
<feature type="binding site" evidence="1">
    <location>
        <position position="10"/>
    </location>
    <ligand>
        <name>NADPH</name>
        <dbReference type="ChEBI" id="CHEBI:57783"/>
    </ligand>
</feature>
<feature type="binding site" evidence="1">
    <location>
        <position position="11"/>
    </location>
    <ligand>
        <name>NADPH</name>
        <dbReference type="ChEBI" id="CHEBI:57783"/>
    </ligand>
</feature>
<feature type="binding site" evidence="1">
    <location>
        <position position="31"/>
    </location>
    <ligand>
        <name>NADPH</name>
        <dbReference type="ChEBI" id="CHEBI:57783"/>
    </ligand>
</feature>
<feature type="binding site" evidence="1">
    <location>
        <position position="105"/>
    </location>
    <ligand>
        <name>NADPH</name>
        <dbReference type="ChEBI" id="CHEBI:57783"/>
    </ligand>
</feature>
<feature type="binding site" evidence="1">
    <location>
        <position position="105"/>
    </location>
    <ligand>
        <name>sn-glycerol 3-phosphate</name>
        <dbReference type="ChEBI" id="CHEBI:57597"/>
    </ligand>
</feature>
<feature type="binding site" evidence="1">
    <location>
        <position position="136"/>
    </location>
    <ligand>
        <name>sn-glycerol 3-phosphate</name>
        <dbReference type="ChEBI" id="CHEBI:57597"/>
    </ligand>
</feature>
<feature type="binding site" evidence="1">
    <location>
        <position position="138"/>
    </location>
    <ligand>
        <name>sn-glycerol 3-phosphate</name>
        <dbReference type="ChEBI" id="CHEBI:57597"/>
    </ligand>
</feature>
<feature type="binding site" evidence="1">
    <location>
        <position position="140"/>
    </location>
    <ligand>
        <name>NADPH</name>
        <dbReference type="ChEBI" id="CHEBI:57783"/>
    </ligand>
</feature>
<feature type="binding site" evidence="1">
    <location>
        <position position="191"/>
    </location>
    <ligand>
        <name>sn-glycerol 3-phosphate</name>
        <dbReference type="ChEBI" id="CHEBI:57597"/>
    </ligand>
</feature>
<feature type="binding site" evidence="1">
    <location>
        <position position="244"/>
    </location>
    <ligand>
        <name>sn-glycerol 3-phosphate</name>
        <dbReference type="ChEBI" id="CHEBI:57597"/>
    </ligand>
</feature>
<feature type="binding site" evidence="1">
    <location>
        <position position="254"/>
    </location>
    <ligand>
        <name>sn-glycerol 3-phosphate</name>
        <dbReference type="ChEBI" id="CHEBI:57597"/>
    </ligand>
</feature>
<feature type="binding site" evidence="1">
    <location>
        <position position="255"/>
    </location>
    <ligand>
        <name>NADPH</name>
        <dbReference type="ChEBI" id="CHEBI:57783"/>
    </ligand>
</feature>
<feature type="binding site" evidence="1">
    <location>
        <position position="255"/>
    </location>
    <ligand>
        <name>sn-glycerol 3-phosphate</name>
        <dbReference type="ChEBI" id="CHEBI:57597"/>
    </ligand>
</feature>
<feature type="binding site" evidence="1">
    <location>
        <position position="256"/>
    </location>
    <ligand>
        <name>sn-glycerol 3-phosphate</name>
        <dbReference type="ChEBI" id="CHEBI:57597"/>
    </ligand>
</feature>
<feature type="binding site" evidence="1">
    <location>
        <position position="279"/>
    </location>
    <ligand>
        <name>NADPH</name>
        <dbReference type="ChEBI" id="CHEBI:57783"/>
    </ligand>
</feature>
<feature type="binding site" evidence="1">
    <location>
        <position position="281"/>
    </location>
    <ligand>
        <name>NADPH</name>
        <dbReference type="ChEBI" id="CHEBI:57783"/>
    </ligand>
</feature>